<comment type="function">
    <text evidence="1">Catalyzes the interconversion of beta-pyran and beta-furan forms of D-ribose.</text>
</comment>
<comment type="catalytic activity">
    <reaction evidence="1">
        <text>beta-D-ribopyranose = beta-D-ribofuranose</text>
        <dbReference type="Rhea" id="RHEA:25432"/>
        <dbReference type="ChEBI" id="CHEBI:27476"/>
        <dbReference type="ChEBI" id="CHEBI:47002"/>
        <dbReference type="EC" id="5.4.99.62"/>
    </reaction>
</comment>
<comment type="pathway">
    <text evidence="1">Carbohydrate metabolism; D-ribose degradation; D-ribose 5-phosphate from beta-D-ribopyranose: step 1/2.</text>
</comment>
<comment type="subunit">
    <text evidence="1">Homodecamer.</text>
</comment>
<comment type="subcellular location">
    <subcellularLocation>
        <location evidence="1">Cytoplasm</location>
    </subcellularLocation>
</comment>
<comment type="similarity">
    <text evidence="1">Belongs to the RbsD / FucU family. RbsD subfamily.</text>
</comment>
<evidence type="ECO:0000255" key="1">
    <source>
        <dbReference type="HAMAP-Rule" id="MF_01661"/>
    </source>
</evidence>
<organism>
    <name type="scientific">Yersinia pestis bv. Antiqua (strain Nepal516)</name>
    <dbReference type="NCBI Taxonomy" id="377628"/>
    <lineage>
        <taxon>Bacteria</taxon>
        <taxon>Pseudomonadati</taxon>
        <taxon>Pseudomonadota</taxon>
        <taxon>Gammaproteobacteria</taxon>
        <taxon>Enterobacterales</taxon>
        <taxon>Yersiniaceae</taxon>
        <taxon>Yersinia</taxon>
    </lineage>
</organism>
<feature type="chain" id="PRO_0000346305" description="D-ribose pyranase">
    <location>
        <begin position="1"/>
        <end position="139"/>
    </location>
</feature>
<feature type="active site" description="Proton donor" evidence="1">
    <location>
        <position position="20"/>
    </location>
</feature>
<feature type="binding site" evidence="1">
    <location>
        <position position="28"/>
    </location>
    <ligand>
        <name>substrate</name>
    </ligand>
</feature>
<feature type="binding site" evidence="1">
    <location>
        <position position="106"/>
    </location>
    <ligand>
        <name>substrate</name>
    </ligand>
</feature>
<feature type="binding site" evidence="1">
    <location>
        <begin position="128"/>
        <end position="130"/>
    </location>
    <ligand>
        <name>substrate</name>
    </ligand>
</feature>
<gene>
    <name evidence="1" type="primary">rbsD</name>
    <name type="ordered locus">YPN_0007</name>
    <name type="ORF">YP516_4532</name>
</gene>
<accession>Q1CNU0</accession>
<accession>D1Q319</accession>
<sequence>MKKGVLLNADISAVISRLGHTDQIVIGDAGLPIPATTTRIDLALTRGVPGFLQVVDVVTQEMQVENAYLAEEIVKNNPQLHEALLVLLTQLEQRQENQIALRYISHEAFKEQTKQSRAVIRSGECSPFANIILGSGVTF</sequence>
<proteinExistence type="inferred from homology"/>
<keyword id="KW-0119">Carbohydrate metabolism</keyword>
<keyword id="KW-0963">Cytoplasm</keyword>
<keyword id="KW-0413">Isomerase</keyword>
<name>RBSD_YERPN</name>
<protein>
    <recommendedName>
        <fullName evidence="1">D-ribose pyranase</fullName>
        <ecNumber evidence="1">5.4.99.62</ecNumber>
    </recommendedName>
</protein>
<dbReference type="EC" id="5.4.99.62" evidence="1"/>
<dbReference type="EMBL" id="CP000305">
    <property type="protein sequence ID" value="ABG16340.1"/>
    <property type="molecule type" value="Genomic_DNA"/>
</dbReference>
<dbReference type="EMBL" id="ACNQ01000019">
    <property type="protein sequence ID" value="EEO74922.1"/>
    <property type="molecule type" value="Genomic_DNA"/>
</dbReference>
<dbReference type="RefSeq" id="WP_002212252.1">
    <property type="nucleotide sequence ID" value="NZ_ACNQ01000019.1"/>
</dbReference>
<dbReference type="SMR" id="Q1CNU0"/>
<dbReference type="GeneID" id="57974587"/>
<dbReference type="KEGG" id="ypn:YPN_0007"/>
<dbReference type="HOGENOM" id="CLU_135498_0_0_6"/>
<dbReference type="UniPathway" id="UPA00916">
    <property type="reaction ID" value="UER00888"/>
</dbReference>
<dbReference type="Proteomes" id="UP000008936">
    <property type="component" value="Chromosome"/>
</dbReference>
<dbReference type="GO" id="GO:0005829">
    <property type="term" value="C:cytosol"/>
    <property type="evidence" value="ECO:0007669"/>
    <property type="project" value="TreeGrafter"/>
</dbReference>
<dbReference type="GO" id="GO:0062193">
    <property type="term" value="F:D-ribose pyranase activity"/>
    <property type="evidence" value="ECO:0007669"/>
    <property type="project" value="UniProtKB-EC"/>
</dbReference>
<dbReference type="GO" id="GO:0016872">
    <property type="term" value="F:intramolecular lyase activity"/>
    <property type="evidence" value="ECO:0007669"/>
    <property type="project" value="UniProtKB-UniRule"/>
</dbReference>
<dbReference type="GO" id="GO:0048029">
    <property type="term" value="F:monosaccharide binding"/>
    <property type="evidence" value="ECO:0007669"/>
    <property type="project" value="InterPro"/>
</dbReference>
<dbReference type="GO" id="GO:0019303">
    <property type="term" value="P:D-ribose catabolic process"/>
    <property type="evidence" value="ECO:0007669"/>
    <property type="project" value="UniProtKB-UniRule"/>
</dbReference>
<dbReference type="FunFam" id="3.40.1650.10:FF:000002">
    <property type="entry name" value="D-ribose pyranase"/>
    <property type="match status" value="1"/>
</dbReference>
<dbReference type="Gene3D" id="3.40.1650.10">
    <property type="entry name" value="RbsD-like domain"/>
    <property type="match status" value="1"/>
</dbReference>
<dbReference type="HAMAP" id="MF_01661">
    <property type="entry name" value="D_rib_pyranase"/>
    <property type="match status" value="1"/>
</dbReference>
<dbReference type="InterPro" id="IPR023064">
    <property type="entry name" value="D-ribose_pyranase"/>
</dbReference>
<dbReference type="InterPro" id="IPR023750">
    <property type="entry name" value="RbsD-like_sf"/>
</dbReference>
<dbReference type="InterPro" id="IPR007721">
    <property type="entry name" value="RbsD_FucU"/>
</dbReference>
<dbReference type="NCBIfam" id="NF008761">
    <property type="entry name" value="PRK11797.1"/>
    <property type="match status" value="1"/>
</dbReference>
<dbReference type="PANTHER" id="PTHR37831">
    <property type="entry name" value="D-RIBOSE PYRANASE"/>
    <property type="match status" value="1"/>
</dbReference>
<dbReference type="PANTHER" id="PTHR37831:SF1">
    <property type="entry name" value="D-RIBOSE PYRANASE"/>
    <property type="match status" value="1"/>
</dbReference>
<dbReference type="Pfam" id="PF05025">
    <property type="entry name" value="RbsD_FucU"/>
    <property type="match status" value="1"/>
</dbReference>
<dbReference type="SUPFAM" id="SSF102546">
    <property type="entry name" value="RbsD-like"/>
    <property type="match status" value="1"/>
</dbReference>
<reference key="1">
    <citation type="journal article" date="2006" name="J. Bacteriol.">
        <title>Complete genome sequence of Yersinia pestis strains Antiqua and Nepal516: evidence of gene reduction in an emerging pathogen.</title>
        <authorList>
            <person name="Chain P.S.G."/>
            <person name="Hu P."/>
            <person name="Malfatti S.A."/>
            <person name="Radnedge L."/>
            <person name="Larimer F."/>
            <person name="Vergez L.M."/>
            <person name="Worsham P."/>
            <person name="Chu M.C."/>
            <person name="Andersen G.L."/>
        </authorList>
    </citation>
    <scope>NUCLEOTIDE SEQUENCE [LARGE SCALE GENOMIC DNA]</scope>
    <source>
        <strain>Nepal516</strain>
    </source>
</reference>
<reference key="2">
    <citation type="submission" date="2009-04" db="EMBL/GenBank/DDBJ databases">
        <title>Yersinia pestis Nepal516A whole genome shotgun sequencing project.</title>
        <authorList>
            <person name="Plunkett G. III"/>
            <person name="Anderson B.D."/>
            <person name="Baumler D.J."/>
            <person name="Burland V."/>
            <person name="Cabot E.L."/>
            <person name="Glasner J.D."/>
            <person name="Mau B."/>
            <person name="Neeno-Eckwall E."/>
            <person name="Perna N.T."/>
            <person name="Munk A.C."/>
            <person name="Tapia R."/>
            <person name="Green L.D."/>
            <person name="Rogers Y.C."/>
            <person name="Detter J.C."/>
            <person name="Bruce D.C."/>
            <person name="Brettin T.S."/>
        </authorList>
    </citation>
    <scope>NUCLEOTIDE SEQUENCE [LARGE SCALE GENOMIC DNA]</scope>
    <source>
        <strain>Nepal516</strain>
    </source>
</reference>